<protein>
    <recommendedName>
        <fullName evidence="1">DNA mismatch repair protein MutL</fullName>
    </recommendedName>
</protein>
<evidence type="ECO:0000255" key="1">
    <source>
        <dbReference type="HAMAP-Rule" id="MF_00149"/>
    </source>
</evidence>
<reference key="1">
    <citation type="submission" date="2008-10" db="EMBL/GenBank/DDBJ databases">
        <title>Genome sequence of Clostridium botulinum A2 Kyoto.</title>
        <authorList>
            <person name="Shrivastava S."/>
            <person name="Brinkac L.M."/>
            <person name="Brown J.L."/>
            <person name="Bruce D."/>
            <person name="Detter C.C."/>
            <person name="Johnson E.A."/>
            <person name="Munk C.A."/>
            <person name="Smith L.A."/>
            <person name="Smith T.J."/>
            <person name="Sutton G."/>
            <person name="Brettin T.S."/>
        </authorList>
    </citation>
    <scope>NUCLEOTIDE SEQUENCE [LARGE SCALE GENOMIC DNA]</scope>
    <source>
        <strain>Kyoto / Type A2</strain>
    </source>
</reference>
<organism>
    <name type="scientific">Clostridium botulinum (strain Kyoto / Type A2)</name>
    <dbReference type="NCBI Taxonomy" id="536232"/>
    <lineage>
        <taxon>Bacteria</taxon>
        <taxon>Bacillati</taxon>
        <taxon>Bacillota</taxon>
        <taxon>Clostridia</taxon>
        <taxon>Eubacteriales</taxon>
        <taxon>Clostridiaceae</taxon>
        <taxon>Clostridium</taxon>
    </lineage>
</organism>
<sequence length="666" mass="76078">MRKINLLDLETTNKIAAGEVIERPFSVVKELVENSIDAGAKNITIEIEDGGQNLIKIIDDGEGIYPIDIKNAFLPHATSKINSIEDIYKISTMGFRGEALASISSVSKTKLKSRVDSYNFGKEIYIEGGKIEYLKDTGCNVGTTIEVSDLFYNVPARLKFLKSARSDSSSISDIVNRFILAHPDISFNLINKGKQSIKSYGTGNLKDSIRCVYNKTISENLINFESHKDIISVYGFIGKPEISRKSRTNQSIFVNKRYVKSKFITAAVENAFKSFLTVNSYPFFVIFIDIFPEYIDVNVHPTKSEVKFKDERAMFKTIFDAVHEAIKGELKESFTNFFNKEDINMYDSEKSIAETIKLEKEEVQIPIDLNSNNKIDIFGNNINKLPNNAELLKNIGIKEKNTLENNNNFYTSKQNEICYTNKNDECLNSCNKDDYSKIEKPLQKDNKNLDALYLNEHNTNSSPINIKENKPNNFYVDMKIIGQFNNTYILIEKDKELYIIDQHAAHEKVLFEKFKSEIEKGYVISQILLSPVVIELSEDEFNIYEENKDIFKNSGFSVETFGECTINIKEVPLILGKPNVEDLFMDILYNLKNMKSKETSTIKYNAIATLACKSAVKANDNLKEEEIKKLIENMLTLNNPYTCPHGRPTMIKFTLKDLEKKFKRIQ</sequence>
<name>MUTL_CLOBJ</name>
<dbReference type="EMBL" id="CP001581">
    <property type="protein sequence ID" value="ACO83413.1"/>
    <property type="molecule type" value="Genomic_DNA"/>
</dbReference>
<dbReference type="RefSeq" id="WP_003358879.1">
    <property type="nucleotide sequence ID" value="NC_012563.1"/>
</dbReference>
<dbReference type="SMR" id="C1FNT8"/>
<dbReference type="KEGG" id="cby:CLM_1956"/>
<dbReference type="eggNOG" id="COG0323">
    <property type="taxonomic scope" value="Bacteria"/>
</dbReference>
<dbReference type="HOGENOM" id="CLU_004131_4_1_9"/>
<dbReference type="Proteomes" id="UP000001374">
    <property type="component" value="Chromosome"/>
</dbReference>
<dbReference type="GO" id="GO:0032300">
    <property type="term" value="C:mismatch repair complex"/>
    <property type="evidence" value="ECO:0007669"/>
    <property type="project" value="InterPro"/>
</dbReference>
<dbReference type="GO" id="GO:0005524">
    <property type="term" value="F:ATP binding"/>
    <property type="evidence" value="ECO:0007669"/>
    <property type="project" value="InterPro"/>
</dbReference>
<dbReference type="GO" id="GO:0016887">
    <property type="term" value="F:ATP hydrolysis activity"/>
    <property type="evidence" value="ECO:0007669"/>
    <property type="project" value="InterPro"/>
</dbReference>
<dbReference type="GO" id="GO:0140664">
    <property type="term" value="F:ATP-dependent DNA damage sensor activity"/>
    <property type="evidence" value="ECO:0007669"/>
    <property type="project" value="InterPro"/>
</dbReference>
<dbReference type="GO" id="GO:0030983">
    <property type="term" value="F:mismatched DNA binding"/>
    <property type="evidence" value="ECO:0007669"/>
    <property type="project" value="InterPro"/>
</dbReference>
<dbReference type="GO" id="GO:0006298">
    <property type="term" value="P:mismatch repair"/>
    <property type="evidence" value="ECO:0007669"/>
    <property type="project" value="UniProtKB-UniRule"/>
</dbReference>
<dbReference type="CDD" id="cd16926">
    <property type="entry name" value="HATPase_MutL-MLH-PMS-like"/>
    <property type="match status" value="1"/>
</dbReference>
<dbReference type="CDD" id="cd00782">
    <property type="entry name" value="MutL_Trans"/>
    <property type="match status" value="1"/>
</dbReference>
<dbReference type="FunFam" id="3.30.565.10:FF:000003">
    <property type="entry name" value="DNA mismatch repair endonuclease MutL"/>
    <property type="match status" value="1"/>
</dbReference>
<dbReference type="Gene3D" id="3.30.230.10">
    <property type="match status" value="1"/>
</dbReference>
<dbReference type="Gene3D" id="3.30.565.10">
    <property type="entry name" value="Histidine kinase-like ATPase, C-terminal domain"/>
    <property type="match status" value="1"/>
</dbReference>
<dbReference type="Gene3D" id="3.30.1540.20">
    <property type="entry name" value="MutL, C-terminal domain, dimerisation subdomain"/>
    <property type="match status" value="1"/>
</dbReference>
<dbReference type="Gene3D" id="3.30.1370.100">
    <property type="entry name" value="MutL, C-terminal domain, regulatory subdomain"/>
    <property type="match status" value="1"/>
</dbReference>
<dbReference type="HAMAP" id="MF_00149">
    <property type="entry name" value="DNA_mis_repair"/>
    <property type="match status" value="1"/>
</dbReference>
<dbReference type="InterPro" id="IPR014762">
    <property type="entry name" value="DNA_mismatch_repair_CS"/>
</dbReference>
<dbReference type="InterPro" id="IPR020667">
    <property type="entry name" value="DNA_mismatch_repair_MutL"/>
</dbReference>
<dbReference type="InterPro" id="IPR013507">
    <property type="entry name" value="DNA_mismatch_S5_2-like"/>
</dbReference>
<dbReference type="InterPro" id="IPR036890">
    <property type="entry name" value="HATPase_C_sf"/>
</dbReference>
<dbReference type="InterPro" id="IPR002099">
    <property type="entry name" value="MutL/Mlh/PMS"/>
</dbReference>
<dbReference type="InterPro" id="IPR038973">
    <property type="entry name" value="MutL/Mlh/Pms-like"/>
</dbReference>
<dbReference type="InterPro" id="IPR014790">
    <property type="entry name" value="MutL_C"/>
</dbReference>
<dbReference type="InterPro" id="IPR042120">
    <property type="entry name" value="MutL_C_dimsub"/>
</dbReference>
<dbReference type="InterPro" id="IPR042121">
    <property type="entry name" value="MutL_C_regsub"/>
</dbReference>
<dbReference type="InterPro" id="IPR037198">
    <property type="entry name" value="MutL_C_sf"/>
</dbReference>
<dbReference type="InterPro" id="IPR020568">
    <property type="entry name" value="Ribosomal_Su5_D2-typ_SF"/>
</dbReference>
<dbReference type="InterPro" id="IPR014721">
    <property type="entry name" value="Ribsml_uS5_D2-typ_fold_subgr"/>
</dbReference>
<dbReference type="NCBIfam" id="TIGR00585">
    <property type="entry name" value="mutl"/>
    <property type="match status" value="1"/>
</dbReference>
<dbReference type="PANTHER" id="PTHR10073">
    <property type="entry name" value="DNA MISMATCH REPAIR PROTEIN MLH, PMS, MUTL"/>
    <property type="match status" value="1"/>
</dbReference>
<dbReference type="PANTHER" id="PTHR10073:SF12">
    <property type="entry name" value="DNA MISMATCH REPAIR PROTEIN MLH1"/>
    <property type="match status" value="1"/>
</dbReference>
<dbReference type="Pfam" id="PF01119">
    <property type="entry name" value="DNA_mis_repair"/>
    <property type="match status" value="1"/>
</dbReference>
<dbReference type="Pfam" id="PF13589">
    <property type="entry name" value="HATPase_c_3"/>
    <property type="match status" value="1"/>
</dbReference>
<dbReference type="Pfam" id="PF08676">
    <property type="entry name" value="MutL_C"/>
    <property type="match status" value="1"/>
</dbReference>
<dbReference type="SMART" id="SM01340">
    <property type="entry name" value="DNA_mis_repair"/>
    <property type="match status" value="1"/>
</dbReference>
<dbReference type="SMART" id="SM00853">
    <property type="entry name" value="MutL_C"/>
    <property type="match status" value="1"/>
</dbReference>
<dbReference type="SUPFAM" id="SSF55874">
    <property type="entry name" value="ATPase domain of HSP90 chaperone/DNA topoisomerase II/histidine kinase"/>
    <property type="match status" value="1"/>
</dbReference>
<dbReference type="SUPFAM" id="SSF118116">
    <property type="entry name" value="DNA mismatch repair protein MutL"/>
    <property type="match status" value="1"/>
</dbReference>
<dbReference type="SUPFAM" id="SSF54211">
    <property type="entry name" value="Ribosomal protein S5 domain 2-like"/>
    <property type="match status" value="1"/>
</dbReference>
<dbReference type="PROSITE" id="PS00058">
    <property type="entry name" value="DNA_MISMATCH_REPAIR_1"/>
    <property type="match status" value="1"/>
</dbReference>
<proteinExistence type="inferred from homology"/>
<feature type="chain" id="PRO_1000192166" description="DNA mismatch repair protein MutL">
    <location>
        <begin position="1"/>
        <end position="666"/>
    </location>
</feature>
<accession>C1FNT8</accession>
<gene>
    <name evidence="1" type="primary">mutL</name>
    <name type="ordered locus">CLM_1956</name>
</gene>
<comment type="function">
    <text evidence="1">This protein is involved in the repair of mismatches in DNA. It is required for dam-dependent methyl-directed DNA mismatch repair. May act as a 'molecular matchmaker', a protein that promotes the formation of a stable complex between two or more DNA-binding proteins in an ATP-dependent manner without itself being part of a final effector complex.</text>
</comment>
<comment type="similarity">
    <text evidence="1">Belongs to the DNA mismatch repair MutL/HexB family.</text>
</comment>
<keyword id="KW-0227">DNA damage</keyword>
<keyword id="KW-0234">DNA repair</keyword>